<proteinExistence type="inferred from homology"/>
<reference key="1">
    <citation type="journal article" date="1997" name="Mol. Biol. Evol.">
        <title>The main features of the craniate mitochondrial DNA between the ND1 and the COI genes were established in the common ancestor with the lancelet.</title>
        <authorList>
            <person name="Delarbre C."/>
            <person name="Barriel V."/>
            <person name="Tillier S."/>
            <person name="Janvier P."/>
            <person name="Gachelin G."/>
        </authorList>
    </citation>
    <scope>NUCLEOTIDE SEQUENCE [GENOMIC DNA]</scope>
</reference>
<reference key="2">
    <citation type="journal article" date="1998" name="J. Mol. Evol.">
        <title>The mitochondrial DNA molecule of the hagfish (Myxine glutinosa) and vertebrate phylogeny.</title>
        <authorList>
            <person name="Rasmussen A.S."/>
            <person name="Janke A."/>
            <person name="Arnason U."/>
        </authorList>
    </citation>
    <scope>NUCLEOTIDE SEQUENCE [GENOMIC DNA]</scope>
</reference>
<reference key="3">
    <citation type="journal article" date="2001" name="J. Mol. Evol.">
        <title>The complete mitochondrial genome of the hagfish Myxine glutinosa: unique features of the control region.</title>
        <authorList>
            <person name="Delarbre C."/>
            <person name="Rasmussen A.S."/>
            <person name="Arnason U."/>
            <person name="Gachelin G."/>
        </authorList>
    </citation>
    <scope>NUCLEOTIDE SEQUENCE [GENOMIC DNA]</scope>
</reference>
<organism>
    <name type="scientific">Myxine glutinosa</name>
    <name type="common">Atlantic hagfish</name>
    <dbReference type="NCBI Taxonomy" id="7769"/>
    <lineage>
        <taxon>Eukaryota</taxon>
        <taxon>Metazoa</taxon>
        <taxon>Chordata</taxon>
        <taxon>Craniata</taxon>
        <taxon>Vertebrata</taxon>
        <taxon>Cyclostomata</taxon>
        <taxon>Myxini</taxon>
        <taxon>Myxiniformes</taxon>
        <taxon>Myxinidae</taxon>
        <taxon>Myxininae</taxon>
        <taxon>Myxine</taxon>
    </lineage>
</organism>
<dbReference type="EC" id="7.1.1.2"/>
<dbReference type="EMBL" id="Y09527">
    <property type="protein sequence ID" value="CAA70716.1"/>
    <property type="molecule type" value="Genomic_DNA"/>
</dbReference>
<dbReference type="EMBL" id="Y15186">
    <property type="protein sequence ID" value="CAA75485.1"/>
    <property type="molecule type" value="Genomic_DNA"/>
</dbReference>
<dbReference type="EMBL" id="AJ404477">
    <property type="protein sequence ID" value="CAC20649.1"/>
    <property type="molecule type" value="Genomic_DNA"/>
</dbReference>
<dbReference type="PIR" id="T13816">
    <property type="entry name" value="T13816"/>
</dbReference>
<dbReference type="RefSeq" id="NP_073273.1">
    <property type="nucleotide sequence ID" value="NC_002639.1"/>
</dbReference>
<dbReference type="SMR" id="O21077"/>
<dbReference type="GeneID" id="802347"/>
<dbReference type="CTD" id="4535"/>
<dbReference type="GO" id="GO:0005743">
    <property type="term" value="C:mitochondrial inner membrane"/>
    <property type="evidence" value="ECO:0007669"/>
    <property type="project" value="UniProtKB-SubCell"/>
</dbReference>
<dbReference type="GO" id="GO:0008137">
    <property type="term" value="F:NADH dehydrogenase (ubiquinone) activity"/>
    <property type="evidence" value="ECO:0007669"/>
    <property type="project" value="UniProtKB-EC"/>
</dbReference>
<dbReference type="GO" id="GO:0009060">
    <property type="term" value="P:aerobic respiration"/>
    <property type="evidence" value="ECO:0007669"/>
    <property type="project" value="TreeGrafter"/>
</dbReference>
<dbReference type="HAMAP" id="MF_01350">
    <property type="entry name" value="NDH1_NuoH"/>
    <property type="match status" value="1"/>
</dbReference>
<dbReference type="InterPro" id="IPR001694">
    <property type="entry name" value="NADH_UbQ_OxRdtase_su1/FPO"/>
</dbReference>
<dbReference type="InterPro" id="IPR018086">
    <property type="entry name" value="NADH_UbQ_OxRdtase_su1_CS"/>
</dbReference>
<dbReference type="PANTHER" id="PTHR11432">
    <property type="entry name" value="NADH DEHYDROGENASE SUBUNIT 1"/>
    <property type="match status" value="1"/>
</dbReference>
<dbReference type="PANTHER" id="PTHR11432:SF3">
    <property type="entry name" value="NADH-UBIQUINONE OXIDOREDUCTASE CHAIN 1"/>
    <property type="match status" value="1"/>
</dbReference>
<dbReference type="Pfam" id="PF00146">
    <property type="entry name" value="NADHdh"/>
    <property type="match status" value="1"/>
</dbReference>
<dbReference type="PROSITE" id="PS00667">
    <property type="entry name" value="COMPLEX1_ND1_1"/>
    <property type="match status" value="1"/>
</dbReference>
<dbReference type="PROSITE" id="PS00668">
    <property type="entry name" value="COMPLEX1_ND1_2"/>
    <property type="match status" value="1"/>
</dbReference>
<keyword id="KW-0249">Electron transport</keyword>
<keyword id="KW-0472">Membrane</keyword>
<keyword id="KW-0496">Mitochondrion</keyword>
<keyword id="KW-0999">Mitochondrion inner membrane</keyword>
<keyword id="KW-0520">NAD</keyword>
<keyword id="KW-0679">Respiratory chain</keyword>
<keyword id="KW-1278">Translocase</keyword>
<keyword id="KW-0812">Transmembrane</keyword>
<keyword id="KW-1133">Transmembrane helix</keyword>
<keyword id="KW-0813">Transport</keyword>
<keyword id="KW-0830">Ubiquinone</keyword>
<comment type="function">
    <text evidence="1">Core subunit of the mitochondrial membrane respiratory chain NADH dehydrogenase (Complex I) that is believed to belong to the minimal assembly required for catalysis. Complex I functions in the transfer of electrons from NADH to the respiratory chain. The immediate electron acceptor for the enzyme is believed to be ubiquinone (By similarity).</text>
</comment>
<comment type="catalytic activity">
    <reaction>
        <text>a ubiquinone + NADH + 5 H(+)(in) = a ubiquinol + NAD(+) + 4 H(+)(out)</text>
        <dbReference type="Rhea" id="RHEA:29091"/>
        <dbReference type="Rhea" id="RHEA-COMP:9565"/>
        <dbReference type="Rhea" id="RHEA-COMP:9566"/>
        <dbReference type="ChEBI" id="CHEBI:15378"/>
        <dbReference type="ChEBI" id="CHEBI:16389"/>
        <dbReference type="ChEBI" id="CHEBI:17976"/>
        <dbReference type="ChEBI" id="CHEBI:57540"/>
        <dbReference type="ChEBI" id="CHEBI:57945"/>
        <dbReference type="EC" id="7.1.1.2"/>
    </reaction>
</comment>
<comment type="subcellular location">
    <subcellularLocation>
        <location evidence="1">Mitochondrion inner membrane</location>
        <topology evidence="1">Multi-pass membrane protein</topology>
    </subcellularLocation>
</comment>
<comment type="similarity">
    <text evidence="3">Belongs to the complex I subunit 1 family.</text>
</comment>
<feature type="chain" id="PRO_0000117435" description="NADH-ubiquinone oxidoreductase chain 1">
    <location>
        <begin position="1"/>
        <end position="318"/>
    </location>
</feature>
<feature type="transmembrane region" description="Helical" evidence="2">
    <location>
        <begin position="5"/>
        <end position="25"/>
    </location>
</feature>
<feature type="transmembrane region" description="Helical" evidence="2">
    <location>
        <begin position="69"/>
        <end position="89"/>
    </location>
</feature>
<feature type="transmembrane region" description="Helical" evidence="2">
    <location>
        <begin position="102"/>
        <end position="122"/>
    </location>
</feature>
<feature type="transmembrane region" description="Helical" evidence="2">
    <location>
        <begin position="148"/>
        <end position="168"/>
    </location>
</feature>
<feature type="transmembrane region" description="Helical" evidence="2">
    <location>
        <begin position="174"/>
        <end position="194"/>
    </location>
</feature>
<feature type="transmembrane region" description="Helical" evidence="2">
    <location>
        <begin position="215"/>
        <end position="235"/>
    </location>
</feature>
<feature type="transmembrane region" description="Helical" evidence="2">
    <location>
        <begin position="253"/>
        <end position="273"/>
    </location>
</feature>
<feature type="transmembrane region" description="Helical" evidence="2">
    <location>
        <begin position="293"/>
        <end position="313"/>
    </location>
</feature>
<feature type="sequence conflict" description="In Ref. 2; CAA75485." evidence="3" ref="2">
    <location>
        <position position="2"/>
    </location>
</feature>
<feature type="sequence conflict" description="In Ref. 2; CAA75485." evidence="3" ref="2">
    <original>F</original>
    <variation>L</variation>
    <location>
        <position position="9"/>
    </location>
</feature>
<gene>
    <name type="primary">MT-ND1</name>
    <name type="synonym">MTND1</name>
    <name type="synonym">NADH1</name>
    <name type="synonym">ND1</name>
</gene>
<protein>
    <recommendedName>
        <fullName>NADH-ubiquinone oxidoreductase chain 1</fullName>
        <ecNumber>7.1.1.2</ecNumber>
    </recommendedName>
    <alternativeName>
        <fullName>NADH dehydrogenase subunit 1</fullName>
    </alternativeName>
</protein>
<evidence type="ECO:0000250" key="1"/>
<evidence type="ECO:0000255" key="2"/>
<evidence type="ECO:0000305" key="3"/>
<sequence length="318" mass="35692">MISQIISSFLTFVMILIAVAFLTLIERKVLGYMQLRKGPNIVGPFGLLQPFADGIKLFIKEPLQPSYASIFLFILAPALAISLALILWISLPLPLALSDMNLGLMFILAISSLSVYSLLTSGWASNSKYALMGALRAVAQTISYEVTLGLMIVALTILSGGFDLKLFIDLQNKIWLLFPMWPIFLMWFISTLAETNRSPFDLTEGESELVSGFNVEFSGGLFALFFLAEYANILFMNSLTVVLFMGSSNLSSLYFSASMTMKTMFLIFLFLWVRASYPRFRYDQLMHLMWKNFLPITLSLLIFQFSMSLFFGVSPSAI</sequence>
<accession>O21077</accession>
<accession>O63917</accession>
<geneLocation type="mitochondrion"/>
<name>NU1M_MYXGL</name>